<dbReference type="EC" id="2.8.1.8" evidence="1"/>
<dbReference type="EMBL" id="CP001340">
    <property type="protein sequence ID" value="ACL95274.1"/>
    <property type="molecule type" value="Genomic_DNA"/>
</dbReference>
<dbReference type="RefSeq" id="WP_010919603.1">
    <property type="nucleotide sequence ID" value="NC_011916.1"/>
</dbReference>
<dbReference type="RefSeq" id="YP_002517182.1">
    <property type="nucleotide sequence ID" value="NC_011916.1"/>
</dbReference>
<dbReference type="SMR" id="B8GW82"/>
<dbReference type="GeneID" id="7331276"/>
<dbReference type="KEGG" id="ccs:CCNA_01809"/>
<dbReference type="PATRIC" id="fig|565050.3.peg.1778"/>
<dbReference type="HOGENOM" id="CLU_033144_2_1_5"/>
<dbReference type="OrthoDB" id="9787898at2"/>
<dbReference type="PhylomeDB" id="B8GW82"/>
<dbReference type="UniPathway" id="UPA00538">
    <property type="reaction ID" value="UER00593"/>
</dbReference>
<dbReference type="Proteomes" id="UP000001364">
    <property type="component" value="Chromosome"/>
</dbReference>
<dbReference type="GO" id="GO:0005737">
    <property type="term" value="C:cytoplasm"/>
    <property type="evidence" value="ECO:0007669"/>
    <property type="project" value="UniProtKB-SubCell"/>
</dbReference>
<dbReference type="GO" id="GO:0051539">
    <property type="term" value="F:4 iron, 4 sulfur cluster binding"/>
    <property type="evidence" value="ECO:0007669"/>
    <property type="project" value="UniProtKB-UniRule"/>
</dbReference>
<dbReference type="GO" id="GO:0016992">
    <property type="term" value="F:lipoate synthase activity"/>
    <property type="evidence" value="ECO:0007669"/>
    <property type="project" value="UniProtKB-UniRule"/>
</dbReference>
<dbReference type="GO" id="GO:0046872">
    <property type="term" value="F:metal ion binding"/>
    <property type="evidence" value="ECO:0007669"/>
    <property type="project" value="UniProtKB-KW"/>
</dbReference>
<dbReference type="CDD" id="cd01335">
    <property type="entry name" value="Radical_SAM"/>
    <property type="match status" value="1"/>
</dbReference>
<dbReference type="FunFam" id="3.20.20.70:FF:000040">
    <property type="entry name" value="Lipoyl synthase"/>
    <property type="match status" value="1"/>
</dbReference>
<dbReference type="Gene3D" id="3.20.20.70">
    <property type="entry name" value="Aldolase class I"/>
    <property type="match status" value="1"/>
</dbReference>
<dbReference type="HAMAP" id="MF_00206">
    <property type="entry name" value="Lipoyl_synth"/>
    <property type="match status" value="1"/>
</dbReference>
<dbReference type="InterPro" id="IPR013785">
    <property type="entry name" value="Aldolase_TIM"/>
</dbReference>
<dbReference type="InterPro" id="IPR006638">
    <property type="entry name" value="Elp3/MiaA/NifB-like_rSAM"/>
</dbReference>
<dbReference type="InterPro" id="IPR031691">
    <property type="entry name" value="LIAS_N"/>
</dbReference>
<dbReference type="InterPro" id="IPR003698">
    <property type="entry name" value="Lipoyl_synth"/>
</dbReference>
<dbReference type="InterPro" id="IPR007197">
    <property type="entry name" value="rSAM"/>
</dbReference>
<dbReference type="NCBIfam" id="TIGR00510">
    <property type="entry name" value="lipA"/>
    <property type="match status" value="1"/>
</dbReference>
<dbReference type="NCBIfam" id="NF004019">
    <property type="entry name" value="PRK05481.1"/>
    <property type="match status" value="1"/>
</dbReference>
<dbReference type="NCBIfam" id="NF009544">
    <property type="entry name" value="PRK12928.1"/>
    <property type="match status" value="1"/>
</dbReference>
<dbReference type="PANTHER" id="PTHR10949">
    <property type="entry name" value="LIPOYL SYNTHASE"/>
    <property type="match status" value="1"/>
</dbReference>
<dbReference type="PANTHER" id="PTHR10949:SF0">
    <property type="entry name" value="LIPOYL SYNTHASE, MITOCHONDRIAL"/>
    <property type="match status" value="1"/>
</dbReference>
<dbReference type="Pfam" id="PF16881">
    <property type="entry name" value="LIAS_N"/>
    <property type="match status" value="1"/>
</dbReference>
<dbReference type="Pfam" id="PF04055">
    <property type="entry name" value="Radical_SAM"/>
    <property type="match status" value="1"/>
</dbReference>
<dbReference type="PIRSF" id="PIRSF005963">
    <property type="entry name" value="Lipoyl_synth"/>
    <property type="match status" value="1"/>
</dbReference>
<dbReference type="SFLD" id="SFLDF00271">
    <property type="entry name" value="lipoyl_synthase"/>
    <property type="match status" value="1"/>
</dbReference>
<dbReference type="SFLD" id="SFLDG01058">
    <property type="entry name" value="lipoyl_synthase_like"/>
    <property type="match status" value="1"/>
</dbReference>
<dbReference type="SMART" id="SM00729">
    <property type="entry name" value="Elp3"/>
    <property type="match status" value="1"/>
</dbReference>
<dbReference type="SUPFAM" id="SSF102114">
    <property type="entry name" value="Radical SAM enzymes"/>
    <property type="match status" value="1"/>
</dbReference>
<dbReference type="PROSITE" id="PS51918">
    <property type="entry name" value="RADICAL_SAM"/>
    <property type="match status" value="1"/>
</dbReference>
<keyword id="KW-0004">4Fe-4S</keyword>
<keyword id="KW-0963">Cytoplasm</keyword>
<keyword id="KW-0408">Iron</keyword>
<keyword id="KW-0411">Iron-sulfur</keyword>
<keyword id="KW-0479">Metal-binding</keyword>
<keyword id="KW-1185">Reference proteome</keyword>
<keyword id="KW-0949">S-adenosyl-L-methionine</keyword>
<keyword id="KW-0808">Transferase</keyword>
<feature type="chain" id="PRO_1000124625" description="Lipoyl synthase">
    <location>
        <begin position="1"/>
        <end position="325"/>
    </location>
</feature>
<feature type="domain" description="Radical SAM core" evidence="2">
    <location>
        <begin position="76"/>
        <end position="292"/>
    </location>
</feature>
<feature type="region of interest" description="Disordered" evidence="3">
    <location>
        <begin position="1"/>
        <end position="33"/>
    </location>
</feature>
<feature type="compositionally biased region" description="Basic and acidic residues" evidence="3">
    <location>
        <begin position="8"/>
        <end position="33"/>
    </location>
</feature>
<feature type="binding site" evidence="1">
    <location>
        <position position="64"/>
    </location>
    <ligand>
        <name>[4Fe-4S] cluster</name>
        <dbReference type="ChEBI" id="CHEBI:49883"/>
        <label>1</label>
    </ligand>
</feature>
<feature type="binding site" evidence="1">
    <location>
        <position position="69"/>
    </location>
    <ligand>
        <name>[4Fe-4S] cluster</name>
        <dbReference type="ChEBI" id="CHEBI:49883"/>
        <label>1</label>
    </ligand>
</feature>
<feature type="binding site" evidence="1">
    <location>
        <position position="75"/>
    </location>
    <ligand>
        <name>[4Fe-4S] cluster</name>
        <dbReference type="ChEBI" id="CHEBI:49883"/>
        <label>1</label>
    </ligand>
</feature>
<feature type="binding site" evidence="1">
    <location>
        <position position="90"/>
    </location>
    <ligand>
        <name>[4Fe-4S] cluster</name>
        <dbReference type="ChEBI" id="CHEBI:49883"/>
        <label>2</label>
        <note>4Fe-4S-S-AdoMet</note>
    </ligand>
</feature>
<feature type="binding site" evidence="1">
    <location>
        <position position="94"/>
    </location>
    <ligand>
        <name>[4Fe-4S] cluster</name>
        <dbReference type="ChEBI" id="CHEBI:49883"/>
        <label>2</label>
        <note>4Fe-4S-S-AdoMet</note>
    </ligand>
</feature>
<feature type="binding site" evidence="1">
    <location>
        <position position="97"/>
    </location>
    <ligand>
        <name>[4Fe-4S] cluster</name>
        <dbReference type="ChEBI" id="CHEBI:49883"/>
        <label>2</label>
        <note>4Fe-4S-S-AdoMet</note>
    </ligand>
</feature>
<feature type="binding site" evidence="1">
    <location>
        <position position="303"/>
    </location>
    <ligand>
        <name>[4Fe-4S] cluster</name>
        <dbReference type="ChEBI" id="CHEBI:49883"/>
        <label>1</label>
    </ligand>
</feature>
<proteinExistence type="inferred from homology"/>
<name>LIPA_CAUVN</name>
<comment type="function">
    <text evidence="1">Catalyzes the radical-mediated insertion of two sulfur atoms into the C-6 and C-8 positions of the octanoyl moiety bound to the lipoyl domains of lipoate-dependent enzymes, thereby converting the octanoylated domains into lipoylated derivatives.</text>
</comment>
<comment type="catalytic activity">
    <reaction evidence="1">
        <text>[[Fe-S] cluster scaffold protein carrying a second [4Fe-4S](2+) cluster] + N(6)-octanoyl-L-lysyl-[protein] + 2 oxidized [2Fe-2S]-[ferredoxin] + 2 S-adenosyl-L-methionine + 4 H(+) = [[Fe-S] cluster scaffold protein] + N(6)-[(R)-dihydrolipoyl]-L-lysyl-[protein] + 4 Fe(3+) + 2 hydrogen sulfide + 2 5'-deoxyadenosine + 2 L-methionine + 2 reduced [2Fe-2S]-[ferredoxin]</text>
        <dbReference type="Rhea" id="RHEA:16585"/>
        <dbReference type="Rhea" id="RHEA-COMP:9928"/>
        <dbReference type="Rhea" id="RHEA-COMP:10000"/>
        <dbReference type="Rhea" id="RHEA-COMP:10001"/>
        <dbReference type="Rhea" id="RHEA-COMP:10475"/>
        <dbReference type="Rhea" id="RHEA-COMP:14568"/>
        <dbReference type="Rhea" id="RHEA-COMP:14569"/>
        <dbReference type="ChEBI" id="CHEBI:15378"/>
        <dbReference type="ChEBI" id="CHEBI:17319"/>
        <dbReference type="ChEBI" id="CHEBI:29034"/>
        <dbReference type="ChEBI" id="CHEBI:29919"/>
        <dbReference type="ChEBI" id="CHEBI:33722"/>
        <dbReference type="ChEBI" id="CHEBI:33737"/>
        <dbReference type="ChEBI" id="CHEBI:33738"/>
        <dbReference type="ChEBI" id="CHEBI:57844"/>
        <dbReference type="ChEBI" id="CHEBI:59789"/>
        <dbReference type="ChEBI" id="CHEBI:78809"/>
        <dbReference type="ChEBI" id="CHEBI:83100"/>
        <dbReference type="EC" id="2.8.1.8"/>
    </reaction>
</comment>
<comment type="cofactor">
    <cofactor evidence="1">
        <name>[4Fe-4S] cluster</name>
        <dbReference type="ChEBI" id="CHEBI:49883"/>
    </cofactor>
    <text evidence="1">Binds 2 [4Fe-4S] clusters per subunit. One cluster is coordinated with 3 cysteines and an exchangeable S-adenosyl-L-methionine.</text>
</comment>
<comment type="pathway">
    <text evidence="1">Protein modification; protein lipoylation via endogenous pathway; protein N(6)-(lipoyl)lysine from octanoyl-[acyl-carrier-protein]: step 2/2.</text>
</comment>
<comment type="subcellular location">
    <subcellularLocation>
        <location evidence="1">Cytoplasm</location>
    </subcellularLocation>
</comment>
<comment type="similarity">
    <text evidence="1">Belongs to the radical SAM superfamily. Lipoyl synthase family.</text>
</comment>
<gene>
    <name evidence="1" type="primary">lipA</name>
    <name type="ordered locus">CCNA_01809</name>
</gene>
<protein>
    <recommendedName>
        <fullName evidence="1">Lipoyl synthase</fullName>
        <ecNumber evidence="1">2.8.1.8</ecNumber>
    </recommendedName>
    <alternativeName>
        <fullName evidence="1">Lip-syn</fullName>
        <shortName evidence="1">LS</shortName>
    </alternativeName>
    <alternativeName>
        <fullName evidence="1">Lipoate synthase</fullName>
    </alternativeName>
    <alternativeName>
        <fullName evidence="1">Lipoic acid synthase</fullName>
    </alternativeName>
    <alternativeName>
        <fullName evidence="1">Sulfur insertion protein LipA</fullName>
    </alternativeName>
</protein>
<evidence type="ECO:0000255" key="1">
    <source>
        <dbReference type="HAMAP-Rule" id="MF_00206"/>
    </source>
</evidence>
<evidence type="ECO:0000255" key="2">
    <source>
        <dbReference type="PROSITE-ProRule" id="PRU01266"/>
    </source>
</evidence>
<evidence type="ECO:0000256" key="3">
    <source>
        <dbReference type="SAM" id="MobiDB-lite"/>
    </source>
</evidence>
<sequence>MATVIDTLKARGSEDRAARHPEKQNRPDTPVLRKPEWLRVRAPGSGQYNETKGIVREHKLHTVCEEAACPNIGECWSQKHATMMIMGEICTRACAFCNVTTGLPTQLDPDEPRRVAEAVAKMGLKHVVITSVDRDDLLDGGARHFAEVVTSIRAAAPGTTIEILTPDFLRKDGAENVVIDSKPDVFNHNLETVPRLYLKIRPGARYYNSLRLLDRVKQRDPSQFTKSGLMVGLGETKEEVMQVMDDMRSAGVDFITIGQYLQPTRKHAAIDRFVTPEEFKAYEAIARAKGFLMVSSSPLTRSSHHAGEDFAKLQAARRALDARTA</sequence>
<accession>B8GW82</accession>
<reference key="1">
    <citation type="journal article" date="2010" name="J. Bacteriol.">
        <title>The genetic basis of laboratory adaptation in Caulobacter crescentus.</title>
        <authorList>
            <person name="Marks M.E."/>
            <person name="Castro-Rojas C.M."/>
            <person name="Teiling C."/>
            <person name="Du L."/>
            <person name="Kapatral V."/>
            <person name="Walunas T.L."/>
            <person name="Crosson S."/>
        </authorList>
    </citation>
    <scope>NUCLEOTIDE SEQUENCE [LARGE SCALE GENOMIC DNA]</scope>
    <source>
        <strain>NA1000 / CB15N</strain>
    </source>
</reference>
<organism>
    <name type="scientific">Caulobacter vibrioides (strain NA1000 / CB15N)</name>
    <name type="common">Caulobacter crescentus</name>
    <dbReference type="NCBI Taxonomy" id="565050"/>
    <lineage>
        <taxon>Bacteria</taxon>
        <taxon>Pseudomonadati</taxon>
        <taxon>Pseudomonadota</taxon>
        <taxon>Alphaproteobacteria</taxon>
        <taxon>Caulobacterales</taxon>
        <taxon>Caulobacteraceae</taxon>
        <taxon>Caulobacter</taxon>
    </lineage>
</organism>